<reference key="1">
    <citation type="journal article" date="2011" name="Stand. Genomic Sci.">
        <title>Complete genome sequence of 'Thioalkalivibrio sulfidophilus' HL-EbGr7.</title>
        <authorList>
            <person name="Muyzer G."/>
            <person name="Sorokin D.Y."/>
            <person name="Mavromatis K."/>
            <person name="Lapidus A."/>
            <person name="Clum A."/>
            <person name="Ivanova N."/>
            <person name="Pati A."/>
            <person name="d'Haeseleer P."/>
            <person name="Woyke T."/>
            <person name="Kyrpides N.C."/>
        </authorList>
    </citation>
    <scope>NUCLEOTIDE SEQUENCE [LARGE SCALE GENOMIC DNA]</scope>
    <source>
        <strain>HL-EbGR7</strain>
    </source>
</reference>
<name>LEUC_THISH</name>
<protein>
    <recommendedName>
        <fullName evidence="1">3-isopropylmalate dehydratase large subunit</fullName>
        <ecNumber evidence="1">4.2.1.33</ecNumber>
    </recommendedName>
    <alternativeName>
        <fullName evidence="1">Alpha-IPM isomerase</fullName>
        <shortName evidence="1">IPMI</shortName>
    </alternativeName>
    <alternativeName>
        <fullName evidence="1">Isopropylmalate isomerase</fullName>
    </alternativeName>
</protein>
<proteinExistence type="inferred from homology"/>
<evidence type="ECO:0000255" key="1">
    <source>
        <dbReference type="HAMAP-Rule" id="MF_01026"/>
    </source>
</evidence>
<comment type="function">
    <text evidence="1">Catalyzes the isomerization between 2-isopropylmalate and 3-isopropylmalate, via the formation of 2-isopropylmaleate.</text>
</comment>
<comment type="catalytic activity">
    <reaction evidence="1">
        <text>(2R,3S)-3-isopropylmalate = (2S)-2-isopropylmalate</text>
        <dbReference type="Rhea" id="RHEA:32287"/>
        <dbReference type="ChEBI" id="CHEBI:1178"/>
        <dbReference type="ChEBI" id="CHEBI:35121"/>
        <dbReference type="EC" id="4.2.1.33"/>
    </reaction>
</comment>
<comment type="cofactor">
    <cofactor evidence="1">
        <name>[4Fe-4S] cluster</name>
        <dbReference type="ChEBI" id="CHEBI:49883"/>
    </cofactor>
    <text evidence="1">Binds 1 [4Fe-4S] cluster per subunit.</text>
</comment>
<comment type="pathway">
    <text evidence="1">Amino-acid biosynthesis; L-leucine biosynthesis; L-leucine from 3-methyl-2-oxobutanoate: step 2/4.</text>
</comment>
<comment type="subunit">
    <text evidence="1">Heterodimer of LeuC and LeuD.</text>
</comment>
<comment type="similarity">
    <text evidence="1">Belongs to the aconitase/IPM isomerase family. LeuC type 1 subfamily.</text>
</comment>
<gene>
    <name evidence="1" type="primary">leuC</name>
    <name type="ordered locus">Tgr7_1245</name>
</gene>
<dbReference type="EC" id="4.2.1.33" evidence="1"/>
<dbReference type="EMBL" id="CP001339">
    <property type="protein sequence ID" value="ACL72331.1"/>
    <property type="molecule type" value="Genomic_DNA"/>
</dbReference>
<dbReference type="RefSeq" id="WP_012637814.1">
    <property type="nucleotide sequence ID" value="NC_011901.1"/>
</dbReference>
<dbReference type="SMR" id="B8GQD6"/>
<dbReference type="STRING" id="396588.Tgr7_1245"/>
<dbReference type="KEGG" id="tgr:Tgr7_1245"/>
<dbReference type="eggNOG" id="COG0065">
    <property type="taxonomic scope" value="Bacteria"/>
</dbReference>
<dbReference type="HOGENOM" id="CLU_006714_3_4_6"/>
<dbReference type="OrthoDB" id="9802769at2"/>
<dbReference type="UniPathway" id="UPA00048">
    <property type="reaction ID" value="UER00071"/>
</dbReference>
<dbReference type="Proteomes" id="UP000002383">
    <property type="component" value="Chromosome"/>
</dbReference>
<dbReference type="GO" id="GO:0003861">
    <property type="term" value="F:3-isopropylmalate dehydratase activity"/>
    <property type="evidence" value="ECO:0007669"/>
    <property type="project" value="UniProtKB-UniRule"/>
</dbReference>
<dbReference type="GO" id="GO:0051539">
    <property type="term" value="F:4 iron, 4 sulfur cluster binding"/>
    <property type="evidence" value="ECO:0007669"/>
    <property type="project" value="UniProtKB-KW"/>
</dbReference>
<dbReference type="GO" id="GO:0046872">
    <property type="term" value="F:metal ion binding"/>
    <property type="evidence" value="ECO:0007669"/>
    <property type="project" value="UniProtKB-KW"/>
</dbReference>
<dbReference type="GO" id="GO:0009098">
    <property type="term" value="P:L-leucine biosynthetic process"/>
    <property type="evidence" value="ECO:0007669"/>
    <property type="project" value="UniProtKB-UniRule"/>
</dbReference>
<dbReference type="CDD" id="cd01583">
    <property type="entry name" value="IPMI"/>
    <property type="match status" value="1"/>
</dbReference>
<dbReference type="FunFam" id="3.30.499.10:FF:000007">
    <property type="entry name" value="3-isopropylmalate dehydratase large subunit"/>
    <property type="match status" value="1"/>
</dbReference>
<dbReference type="Gene3D" id="3.30.499.10">
    <property type="entry name" value="Aconitase, domain 3"/>
    <property type="match status" value="2"/>
</dbReference>
<dbReference type="HAMAP" id="MF_01026">
    <property type="entry name" value="LeuC_type1"/>
    <property type="match status" value="1"/>
</dbReference>
<dbReference type="InterPro" id="IPR004430">
    <property type="entry name" value="3-IsopropMal_deHydase_lsu"/>
</dbReference>
<dbReference type="InterPro" id="IPR015931">
    <property type="entry name" value="Acnase/IPM_dHydase_lsu_aba_1/3"/>
</dbReference>
<dbReference type="InterPro" id="IPR001030">
    <property type="entry name" value="Acoase/IPM_deHydtase_lsu_aba"/>
</dbReference>
<dbReference type="InterPro" id="IPR018136">
    <property type="entry name" value="Aconitase_4Fe-4S_BS"/>
</dbReference>
<dbReference type="InterPro" id="IPR036008">
    <property type="entry name" value="Aconitase_4Fe-4S_dom"/>
</dbReference>
<dbReference type="InterPro" id="IPR050067">
    <property type="entry name" value="IPM_dehydratase_rel_enz"/>
</dbReference>
<dbReference type="InterPro" id="IPR033941">
    <property type="entry name" value="IPMI_cat"/>
</dbReference>
<dbReference type="NCBIfam" id="TIGR00170">
    <property type="entry name" value="leuC"/>
    <property type="match status" value="1"/>
</dbReference>
<dbReference type="NCBIfam" id="NF004016">
    <property type="entry name" value="PRK05478.1"/>
    <property type="match status" value="1"/>
</dbReference>
<dbReference type="NCBIfam" id="NF009116">
    <property type="entry name" value="PRK12466.1"/>
    <property type="match status" value="1"/>
</dbReference>
<dbReference type="PANTHER" id="PTHR43822:SF9">
    <property type="entry name" value="3-ISOPROPYLMALATE DEHYDRATASE"/>
    <property type="match status" value="1"/>
</dbReference>
<dbReference type="PANTHER" id="PTHR43822">
    <property type="entry name" value="HOMOACONITASE, MITOCHONDRIAL-RELATED"/>
    <property type="match status" value="1"/>
</dbReference>
<dbReference type="Pfam" id="PF00330">
    <property type="entry name" value="Aconitase"/>
    <property type="match status" value="1"/>
</dbReference>
<dbReference type="PRINTS" id="PR00415">
    <property type="entry name" value="ACONITASE"/>
</dbReference>
<dbReference type="SUPFAM" id="SSF53732">
    <property type="entry name" value="Aconitase iron-sulfur domain"/>
    <property type="match status" value="1"/>
</dbReference>
<dbReference type="PROSITE" id="PS00450">
    <property type="entry name" value="ACONITASE_1"/>
    <property type="match status" value="1"/>
</dbReference>
<dbReference type="PROSITE" id="PS01244">
    <property type="entry name" value="ACONITASE_2"/>
    <property type="match status" value="1"/>
</dbReference>
<sequence>MTGKTLYDKLWDAHVVRTEPDGTALLYIDRHLVHEVTSPQAFEGLRLAGRKPWRTDTVLAVPDHNVPTTHRDQGISDPVSRIQVETLDANVHEFGITFFPMNDVRQGIVHVIGPEQGATLPGMTVVCGDSHTSTHGAFGALAFGIGTSEVEHVLATQCLLQKKMKNMLVSVDGRVGPGVTAKDIVLAIIGEIGTAGGTGYAIEFGGEAIRDLSMEGRMTVCNMAIEAGARAGMVAVDETTIEYVKGRTYAPTGEQWESAVAAWRELNSDADARFDRVVRLDATAIAPQVSWGTSPEMVVPVTGRVPDPAEATDPVKASGMKRALEYMGLAANTPIEQIAIDKVFIGSCTNSRIEDLRAAAAVVRGRKVAGNVKLAMVVPGSGLVKQQAEQEGLDQVFLEAGFEWREPGCSMCLAMNADRLEPGERCASTSNRNFEGRQGQGGRTHLVSPAMAAAAAVTGHFTDVRQLAQS</sequence>
<feature type="chain" id="PRO_1000149375" description="3-isopropylmalate dehydratase large subunit">
    <location>
        <begin position="1"/>
        <end position="470"/>
    </location>
</feature>
<feature type="binding site" evidence="1">
    <location>
        <position position="348"/>
    </location>
    <ligand>
        <name>[4Fe-4S] cluster</name>
        <dbReference type="ChEBI" id="CHEBI:49883"/>
    </ligand>
</feature>
<feature type="binding site" evidence="1">
    <location>
        <position position="409"/>
    </location>
    <ligand>
        <name>[4Fe-4S] cluster</name>
        <dbReference type="ChEBI" id="CHEBI:49883"/>
    </ligand>
</feature>
<feature type="binding site" evidence="1">
    <location>
        <position position="412"/>
    </location>
    <ligand>
        <name>[4Fe-4S] cluster</name>
        <dbReference type="ChEBI" id="CHEBI:49883"/>
    </ligand>
</feature>
<accession>B8GQD6</accession>
<keyword id="KW-0004">4Fe-4S</keyword>
<keyword id="KW-0028">Amino-acid biosynthesis</keyword>
<keyword id="KW-0100">Branched-chain amino acid biosynthesis</keyword>
<keyword id="KW-0408">Iron</keyword>
<keyword id="KW-0411">Iron-sulfur</keyword>
<keyword id="KW-0432">Leucine biosynthesis</keyword>
<keyword id="KW-0456">Lyase</keyword>
<keyword id="KW-0479">Metal-binding</keyword>
<keyword id="KW-1185">Reference proteome</keyword>
<organism>
    <name type="scientific">Thioalkalivibrio sulfidiphilus (strain HL-EbGR7)</name>
    <dbReference type="NCBI Taxonomy" id="396588"/>
    <lineage>
        <taxon>Bacteria</taxon>
        <taxon>Pseudomonadati</taxon>
        <taxon>Pseudomonadota</taxon>
        <taxon>Gammaproteobacteria</taxon>
        <taxon>Chromatiales</taxon>
        <taxon>Ectothiorhodospiraceae</taxon>
        <taxon>Thioalkalivibrio</taxon>
    </lineage>
</organism>